<feature type="chain" id="PRO_1000196713" description="S-adenosylmethionine synthase">
    <location>
        <begin position="1"/>
        <end position="384"/>
    </location>
</feature>
<feature type="region of interest" description="Flexible loop" evidence="1">
    <location>
        <begin position="99"/>
        <end position="109"/>
    </location>
</feature>
<feature type="binding site" description="in other chain" evidence="1">
    <location>
        <position position="15"/>
    </location>
    <ligand>
        <name>ATP</name>
        <dbReference type="ChEBI" id="CHEBI:30616"/>
        <note>ligand shared between two neighboring subunits</note>
    </ligand>
</feature>
<feature type="binding site" evidence="1">
    <location>
        <position position="17"/>
    </location>
    <ligand>
        <name>Mg(2+)</name>
        <dbReference type="ChEBI" id="CHEBI:18420"/>
    </ligand>
</feature>
<feature type="binding site" evidence="1">
    <location>
        <position position="43"/>
    </location>
    <ligand>
        <name>K(+)</name>
        <dbReference type="ChEBI" id="CHEBI:29103"/>
    </ligand>
</feature>
<feature type="binding site" description="in other chain" evidence="1">
    <location>
        <position position="56"/>
    </location>
    <ligand>
        <name>L-methionine</name>
        <dbReference type="ChEBI" id="CHEBI:57844"/>
        <note>ligand shared between two neighboring subunits</note>
    </ligand>
</feature>
<feature type="binding site" description="in other chain" evidence="1">
    <location>
        <position position="99"/>
    </location>
    <ligand>
        <name>L-methionine</name>
        <dbReference type="ChEBI" id="CHEBI:57844"/>
        <note>ligand shared between two neighboring subunits</note>
    </ligand>
</feature>
<feature type="binding site" description="in other chain" evidence="1">
    <location>
        <begin position="164"/>
        <end position="166"/>
    </location>
    <ligand>
        <name>ATP</name>
        <dbReference type="ChEBI" id="CHEBI:30616"/>
        <note>ligand shared between two neighboring subunits</note>
    </ligand>
</feature>
<feature type="binding site" description="in other chain" evidence="1">
    <location>
        <begin position="230"/>
        <end position="231"/>
    </location>
    <ligand>
        <name>ATP</name>
        <dbReference type="ChEBI" id="CHEBI:30616"/>
        <note>ligand shared between two neighboring subunits</note>
    </ligand>
</feature>
<feature type="binding site" evidence="1">
    <location>
        <position position="239"/>
    </location>
    <ligand>
        <name>ATP</name>
        <dbReference type="ChEBI" id="CHEBI:30616"/>
        <note>ligand shared between two neighboring subunits</note>
    </ligand>
</feature>
<feature type="binding site" evidence="1">
    <location>
        <position position="239"/>
    </location>
    <ligand>
        <name>L-methionine</name>
        <dbReference type="ChEBI" id="CHEBI:57844"/>
        <note>ligand shared between two neighboring subunits</note>
    </ligand>
</feature>
<feature type="binding site" description="in other chain" evidence="1">
    <location>
        <begin position="245"/>
        <end position="246"/>
    </location>
    <ligand>
        <name>ATP</name>
        <dbReference type="ChEBI" id="CHEBI:30616"/>
        <note>ligand shared between two neighboring subunits</note>
    </ligand>
</feature>
<feature type="binding site" evidence="1">
    <location>
        <position position="262"/>
    </location>
    <ligand>
        <name>ATP</name>
        <dbReference type="ChEBI" id="CHEBI:30616"/>
        <note>ligand shared between two neighboring subunits</note>
    </ligand>
</feature>
<feature type="binding site" evidence="1">
    <location>
        <position position="266"/>
    </location>
    <ligand>
        <name>ATP</name>
        <dbReference type="ChEBI" id="CHEBI:30616"/>
        <note>ligand shared between two neighboring subunits</note>
    </ligand>
</feature>
<feature type="binding site" description="in other chain" evidence="1">
    <location>
        <position position="270"/>
    </location>
    <ligand>
        <name>L-methionine</name>
        <dbReference type="ChEBI" id="CHEBI:57844"/>
        <note>ligand shared between two neighboring subunits</note>
    </ligand>
</feature>
<dbReference type="EC" id="2.5.1.6" evidence="1"/>
<dbReference type="EMBL" id="CU928158">
    <property type="protein sequence ID" value="CAQ90374.1"/>
    <property type="molecule type" value="Genomic_DNA"/>
</dbReference>
<dbReference type="RefSeq" id="WP_001062131.1">
    <property type="nucleotide sequence ID" value="NC_011740.1"/>
</dbReference>
<dbReference type="SMR" id="B7LPQ9"/>
<dbReference type="GeneID" id="75060501"/>
<dbReference type="KEGG" id="efe:EFER_2881"/>
<dbReference type="HOGENOM" id="CLU_041802_1_1_6"/>
<dbReference type="OrthoDB" id="9801686at2"/>
<dbReference type="UniPathway" id="UPA00315">
    <property type="reaction ID" value="UER00080"/>
</dbReference>
<dbReference type="Proteomes" id="UP000000745">
    <property type="component" value="Chromosome"/>
</dbReference>
<dbReference type="GO" id="GO:0005737">
    <property type="term" value="C:cytoplasm"/>
    <property type="evidence" value="ECO:0007669"/>
    <property type="project" value="UniProtKB-SubCell"/>
</dbReference>
<dbReference type="GO" id="GO:0005524">
    <property type="term" value="F:ATP binding"/>
    <property type="evidence" value="ECO:0007669"/>
    <property type="project" value="UniProtKB-UniRule"/>
</dbReference>
<dbReference type="GO" id="GO:0000287">
    <property type="term" value="F:magnesium ion binding"/>
    <property type="evidence" value="ECO:0007669"/>
    <property type="project" value="UniProtKB-UniRule"/>
</dbReference>
<dbReference type="GO" id="GO:0004478">
    <property type="term" value="F:methionine adenosyltransferase activity"/>
    <property type="evidence" value="ECO:0007669"/>
    <property type="project" value="UniProtKB-UniRule"/>
</dbReference>
<dbReference type="GO" id="GO:0006730">
    <property type="term" value="P:one-carbon metabolic process"/>
    <property type="evidence" value="ECO:0007669"/>
    <property type="project" value="UniProtKB-KW"/>
</dbReference>
<dbReference type="GO" id="GO:0006556">
    <property type="term" value="P:S-adenosylmethionine biosynthetic process"/>
    <property type="evidence" value="ECO:0007669"/>
    <property type="project" value="UniProtKB-UniRule"/>
</dbReference>
<dbReference type="CDD" id="cd18079">
    <property type="entry name" value="S-AdoMet_synt"/>
    <property type="match status" value="1"/>
</dbReference>
<dbReference type="FunFam" id="3.30.300.10:FF:000001">
    <property type="entry name" value="S-adenosylmethionine synthase"/>
    <property type="match status" value="1"/>
</dbReference>
<dbReference type="FunFam" id="3.30.300.10:FF:000003">
    <property type="entry name" value="S-adenosylmethionine synthase"/>
    <property type="match status" value="1"/>
</dbReference>
<dbReference type="Gene3D" id="3.30.300.10">
    <property type="match status" value="3"/>
</dbReference>
<dbReference type="HAMAP" id="MF_00086">
    <property type="entry name" value="S_AdoMet_synth1"/>
    <property type="match status" value="1"/>
</dbReference>
<dbReference type="InterPro" id="IPR022631">
    <property type="entry name" value="ADOMET_SYNTHASE_CS"/>
</dbReference>
<dbReference type="InterPro" id="IPR022630">
    <property type="entry name" value="S-AdoMet_synt_C"/>
</dbReference>
<dbReference type="InterPro" id="IPR022629">
    <property type="entry name" value="S-AdoMet_synt_central"/>
</dbReference>
<dbReference type="InterPro" id="IPR022628">
    <property type="entry name" value="S-AdoMet_synt_N"/>
</dbReference>
<dbReference type="InterPro" id="IPR002133">
    <property type="entry name" value="S-AdoMet_synthetase"/>
</dbReference>
<dbReference type="InterPro" id="IPR022636">
    <property type="entry name" value="S-AdoMet_synthetase_sfam"/>
</dbReference>
<dbReference type="NCBIfam" id="TIGR01034">
    <property type="entry name" value="metK"/>
    <property type="match status" value="1"/>
</dbReference>
<dbReference type="PANTHER" id="PTHR11964">
    <property type="entry name" value="S-ADENOSYLMETHIONINE SYNTHETASE"/>
    <property type="match status" value="1"/>
</dbReference>
<dbReference type="Pfam" id="PF02773">
    <property type="entry name" value="S-AdoMet_synt_C"/>
    <property type="match status" value="1"/>
</dbReference>
<dbReference type="Pfam" id="PF02772">
    <property type="entry name" value="S-AdoMet_synt_M"/>
    <property type="match status" value="1"/>
</dbReference>
<dbReference type="Pfam" id="PF00438">
    <property type="entry name" value="S-AdoMet_synt_N"/>
    <property type="match status" value="1"/>
</dbReference>
<dbReference type="PIRSF" id="PIRSF000497">
    <property type="entry name" value="MAT"/>
    <property type="match status" value="1"/>
</dbReference>
<dbReference type="SUPFAM" id="SSF55973">
    <property type="entry name" value="S-adenosylmethionine synthetase"/>
    <property type="match status" value="3"/>
</dbReference>
<dbReference type="PROSITE" id="PS00376">
    <property type="entry name" value="ADOMET_SYNTHASE_1"/>
    <property type="match status" value="1"/>
</dbReference>
<dbReference type="PROSITE" id="PS00377">
    <property type="entry name" value="ADOMET_SYNTHASE_2"/>
    <property type="match status" value="1"/>
</dbReference>
<keyword id="KW-0067">ATP-binding</keyword>
<keyword id="KW-0963">Cytoplasm</keyword>
<keyword id="KW-0460">Magnesium</keyword>
<keyword id="KW-0479">Metal-binding</keyword>
<keyword id="KW-0547">Nucleotide-binding</keyword>
<keyword id="KW-0554">One-carbon metabolism</keyword>
<keyword id="KW-0630">Potassium</keyword>
<keyword id="KW-0808">Transferase</keyword>
<reference key="1">
    <citation type="journal article" date="2009" name="PLoS Genet.">
        <title>Organised genome dynamics in the Escherichia coli species results in highly diverse adaptive paths.</title>
        <authorList>
            <person name="Touchon M."/>
            <person name="Hoede C."/>
            <person name="Tenaillon O."/>
            <person name="Barbe V."/>
            <person name="Baeriswyl S."/>
            <person name="Bidet P."/>
            <person name="Bingen E."/>
            <person name="Bonacorsi S."/>
            <person name="Bouchier C."/>
            <person name="Bouvet O."/>
            <person name="Calteau A."/>
            <person name="Chiapello H."/>
            <person name="Clermont O."/>
            <person name="Cruveiller S."/>
            <person name="Danchin A."/>
            <person name="Diard M."/>
            <person name="Dossat C."/>
            <person name="Karoui M.E."/>
            <person name="Frapy E."/>
            <person name="Garry L."/>
            <person name="Ghigo J.M."/>
            <person name="Gilles A.M."/>
            <person name="Johnson J."/>
            <person name="Le Bouguenec C."/>
            <person name="Lescat M."/>
            <person name="Mangenot S."/>
            <person name="Martinez-Jehanne V."/>
            <person name="Matic I."/>
            <person name="Nassif X."/>
            <person name="Oztas S."/>
            <person name="Petit M.A."/>
            <person name="Pichon C."/>
            <person name="Rouy Z."/>
            <person name="Ruf C.S."/>
            <person name="Schneider D."/>
            <person name="Tourret J."/>
            <person name="Vacherie B."/>
            <person name="Vallenet D."/>
            <person name="Medigue C."/>
            <person name="Rocha E.P.C."/>
            <person name="Denamur E."/>
        </authorList>
    </citation>
    <scope>NUCLEOTIDE SEQUENCE [LARGE SCALE GENOMIC DNA]</scope>
    <source>
        <strain>ATCC 35469 / DSM 13698 / BCRC 15582 / CCUG 18766 / IAM 14443 / JCM 21226 / LMG 7866 / NBRC 102419 / NCTC 12128 / CDC 0568-73</strain>
    </source>
</reference>
<evidence type="ECO:0000255" key="1">
    <source>
        <dbReference type="HAMAP-Rule" id="MF_00086"/>
    </source>
</evidence>
<proteinExistence type="inferred from homology"/>
<protein>
    <recommendedName>
        <fullName evidence="1">S-adenosylmethionine synthase</fullName>
        <shortName evidence="1">AdoMet synthase</shortName>
        <ecNumber evidence="1">2.5.1.6</ecNumber>
    </recommendedName>
    <alternativeName>
        <fullName evidence="1">MAT</fullName>
    </alternativeName>
    <alternativeName>
        <fullName evidence="1">Methionine adenosyltransferase</fullName>
    </alternativeName>
</protein>
<sequence length="384" mass="41966">MAKHLFTSESVSEGHPDKIADQISDAVLDAILEQDPKARVACETYVKTGMVLVGGEITTSAWVDIEEITRNTVREIGYVHSDMGFDANSCAVLSAIGKQSPDINQGVDRADPLEQGAGDQGLMFGYATNETDVLMPAPITYAHRLVQRQAEVRKNGTLPWLRPDAKSQVTFQYDDGKIVGIDAVVLSTQHSEEIDQKSLQEAVMEEIIKPILPAEWLTSATKFFINPTGRFVIGGPMGDCGLTGRKIIVDTYGGMARHGGGAFSGKDPSKVDRSAAYAARYVAKNIVAAGLADRCEIQVSYAIGVAEPTSIMVETFGTEKVPSEQLTLLVREFFDLRPYGLIQMLDLLHPIYKETAAYGHFGREHFPWEKTDKAQLLREAAGLK</sequence>
<name>METK_ESCF3</name>
<accession>B7LPQ9</accession>
<gene>
    <name evidence="1" type="primary">metK</name>
    <name type="ordered locus">EFER_2881</name>
</gene>
<organism>
    <name type="scientific">Escherichia fergusonii (strain ATCC 35469 / DSM 13698 / CCUG 18766 / IAM 14443 / JCM 21226 / LMG 7866 / NBRC 102419 / NCTC 12128 / CDC 0568-73)</name>
    <dbReference type="NCBI Taxonomy" id="585054"/>
    <lineage>
        <taxon>Bacteria</taxon>
        <taxon>Pseudomonadati</taxon>
        <taxon>Pseudomonadota</taxon>
        <taxon>Gammaproteobacteria</taxon>
        <taxon>Enterobacterales</taxon>
        <taxon>Enterobacteriaceae</taxon>
        <taxon>Escherichia</taxon>
    </lineage>
</organism>
<comment type="function">
    <text evidence="1">Catalyzes the formation of S-adenosylmethionine (AdoMet) from methionine and ATP. The overall synthetic reaction is composed of two sequential steps, AdoMet formation and the subsequent tripolyphosphate hydrolysis which occurs prior to release of AdoMet from the enzyme.</text>
</comment>
<comment type="catalytic activity">
    <reaction evidence="1">
        <text>L-methionine + ATP + H2O = S-adenosyl-L-methionine + phosphate + diphosphate</text>
        <dbReference type="Rhea" id="RHEA:21080"/>
        <dbReference type="ChEBI" id="CHEBI:15377"/>
        <dbReference type="ChEBI" id="CHEBI:30616"/>
        <dbReference type="ChEBI" id="CHEBI:33019"/>
        <dbReference type="ChEBI" id="CHEBI:43474"/>
        <dbReference type="ChEBI" id="CHEBI:57844"/>
        <dbReference type="ChEBI" id="CHEBI:59789"/>
        <dbReference type="EC" id="2.5.1.6"/>
    </reaction>
</comment>
<comment type="cofactor">
    <cofactor evidence="1">
        <name>Mg(2+)</name>
        <dbReference type="ChEBI" id="CHEBI:18420"/>
    </cofactor>
    <text evidence="1">Binds 2 divalent ions per subunit.</text>
</comment>
<comment type="cofactor">
    <cofactor evidence="1">
        <name>K(+)</name>
        <dbReference type="ChEBI" id="CHEBI:29103"/>
    </cofactor>
    <text evidence="1">Binds 1 potassium ion per subunit.</text>
</comment>
<comment type="pathway">
    <text evidence="1">Amino-acid biosynthesis; S-adenosyl-L-methionine biosynthesis; S-adenosyl-L-methionine from L-methionine: step 1/1.</text>
</comment>
<comment type="subunit">
    <text evidence="1">Homotetramer; dimer of dimers.</text>
</comment>
<comment type="subcellular location">
    <subcellularLocation>
        <location evidence="1">Cytoplasm</location>
    </subcellularLocation>
</comment>
<comment type="similarity">
    <text evidence="1">Belongs to the AdoMet synthase family.</text>
</comment>